<proteinExistence type="inferred from homology"/>
<gene>
    <name evidence="1" type="primary">cyaY</name>
    <name type="ordered locus">RrIowa_0528</name>
</gene>
<comment type="function">
    <text evidence="1">Involved in iron-sulfur (Fe-S) cluster assembly. May act as a regulator of Fe-S biogenesis.</text>
</comment>
<comment type="similarity">
    <text evidence="1">Belongs to the frataxin family.</text>
</comment>
<keyword id="KW-0408">Iron</keyword>
<keyword id="KW-0479">Metal-binding</keyword>
<accession>B0BX32</accession>
<organism>
    <name type="scientific">Rickettsia rickettsii (strain Iowa)</name>
    <dbReference type="NCBI Taxonomy" id="452659"/>
    <lineage>
        <taxon>Bacteria</taxon>
        <taxon>Pseudomonadati</taxon>
        <taxon>Pseudomonadota</taxon>
        <taxon>Alphaproteobacteria</taxon>
        <taxon>Rickettsiales</taxon>
        <taxon>Rickettsiaceae</taxon>
        <taxon>Rickettsieae</taxon>
        <taxon>Rickettsia</taxon>
        <taxon>spotted fever group</taxon>
    </lineage>
</organism>
<sequence length="103" mass="11688">MNNSEFSKIAETTIAYIAEKIEEQDKEASIDVDLQGDILNLDTDKGVYVINKQSAAKEIWLSSPVSGPYHFFYEQGKWTNRAGLELMAILTEELNIKFDTRPT</sequence>
<protein>
    <recommendedName>
        <fullName evidence="1">Iron-sulfur cluster assembly protein CyaY</fullName>
    </recommendedName>
</protein>
<reference key="1">
    <citation type="journal article" date="2008" name="Infect. Immun.">
        <title>Genomic comparison of virulent Rickettsia rickettsii Sheila Smith and avirulent Rickettsia rickettsii Iowa.</title>
        <authorList>
            <person name="Ellison D.W."/>
            <person name="Clark T.R."/>
            <person name="Sturdevant D.E."/>
            <person name="Virtaneva K."/>
            <person name="Porcella S.F."/>
            <person name="Hackstadt T."/>
        </authorList>
    </citation>
    <scope>NUCLEOTIDE SEQUENCE [LARGE SCALE GENOMIC DNA]</scope>
    <source>
        <strain>Iowa</strain>
    </source>
</reference>
<name>CYAY_RICRO</name>
<dbReference type="EMBL" id="CP000766">
    <property type="protein sequence ID" value="ABY72408.1"/>
    <property type="molecule type" value="Genomic_DNA"/>
</dbReference>
<dbReference type="RefSeq" id="WP_012150646.1">
    <property type="nucleotide sequence ID" value="NC_010263.3"/>
</dbReference>
<dbReference type="SMR" id="B0BX32"/>
<dbReference type="GeneID" id="79937209"/>
<dbReference type="KEGG" id="rrj:RrIowa_0528"/>
<dbReference type="eggNOG" id="COG1965">
    <property type="taxonomic scope" value="Bacteria"/>
</dbReference>
<dbReference type="HOGENOM" id="CLU_080880_4_1_5"/>
<dbReference type="Proteomes" id="UP000000796">
    <property type="component" value="Chromosome"/>
</dbReference>
<dbReference type="GO" id="GO:0005737">
    <property type="term" value="C:cytoplasm"/>
    <property type="evidence" value="ECO:0007669"/>
    <property type="project" value="UniProtKB-ARBA"/>
</dbReference>
<dbReference type="GO" id="GO:0051537">
    <property type="term" value="F:2 iron, 2 sulfur cluster binding"/>
    <property type="evidence" value="ECO:0007669"/>
    <property type="project" value="TreeGrafter"/>
</dbReference>
<dbReference type="GO" id="GO:0008199">
    <property type="term" value="F:ferric iron binding"/>
    <property type="evidence" value="ECO:0007669"/>
    <property type="project" value="InterPro"/>
</dbReference>
<dbReference type="GO" id="GO:0008198">
    <property type="term" value="F:ferrous iron binding"/>
    <property type="evidence" value="ECO:0007669"/>
    <property type="project" value="TreeGrafter"/>
</dbReference>
<dbReference type="GO" id="GO:0004322">
    <property type="term" value="F:ferroxidase activity"/>
    <property type="evidence" value="ECO:0007669"/>
    <property type="project" value="TreeGrafter"/>
</dbReference>
<dbReference type="GO" id="GO:0034986">
    <property type="term" value="F:iron chaperone activity"/>
    <property type="evidence" value="ECO:0007669"/>
    <property type="project" value="TreeGrafter"/>
</dbReference>
<dbReference type="GO" id="GO:0006879">
    <property type="term" value="P:intracellular iron ion homeostasis"/>
    <property type="evidence" value="ECO:0007669"/>
    <property type="project" value="TreeGrafter"/>
</dbReference>
<dbReference type="GO" id="GO:0016226">
    <property type="term" value="P:iron-sulfur cluster assembly"/>
    <property type="evidence" value="ECO:0007669"/>
    <property type="project" value="UniProtKB-UniRule"/>
</dbReference>
<dbReference type="Gene3D" id="3.30.920.10">
    <property type="entry name" value="Frataxin/CyaY"/>
    <property type="match status" value="1"/>
</dbReference>
<dbReference type="HAMAP" id="MF_00142">
    <property type="entry name" value="CyaY"/>
    <property type="match status" value="1"/>
</dbReference>
<dbReference type="InterPro" id="IPR047584">
    <property type="entry name" value="CyaY"/>
</dbReference>
<dbReference type="InterPro" id="IPR002908">
    <property type="entry name" value="Frataxin/CyaY"/>
</dbReference>
<dbReference type="InterPro" id="IPR036524">
    <property type="entry name" value="Frataxin/CyaY_sf"/>
</dbReference>
<dbReference type="InterPro" id="IPR020895">
    <property type="entry name" value="Frataxin_CS"/>
</dbReference>
<dbReference type="NCBIfam" id="TIGR03421">
    <property type="entry name" value="FeS_CyaY"/>
    <property type="match status" value="1"/>
</dbReference>
<dbReference type="PANTHER" id="PTHR16821">
    <property type="entry name" value="FRATAXIN"/>
    <property type="match status" value="1"/>
</dbReference>
<dbReference type="PANTHER" id="PTHR16821:SF2">
    <property type="entry name" value="FRATAXIN, MITOCHONDRIAL"/>
    <property type="match status" value="1"/>
</dbReference>
<dbReference type="Pfam" id="PF01491">
    <property type="entry name" value="Frataxin_Cyay"/>
    <property type="match status" value="1"/>
</dbReference>
<dbReference type="SMART" id="SM01219">
    <property type="entry name" value="Frataxin_Cyay"/>
    <property type="match status" value="1"/>
</dbReference>
<dbReference type="SUPFAM" id="SSF55387">
    <property type="entry name" value="Frataxin/Nqo15-like"/>
    <property type="match status" value="1"/>
</dbReference>
<dbReference type="PROSITE" id="PS01344">
    <property type="entry name" value="FRATAXIN_1"/>
    <property type="match status" value="1"/>
</dbReference>
<dbReference type="PROSITE" id="PS50810">
    <property type="entry name" value="FRATAXIN_2"/>
    <property type="match status" value="1"/>
</dbReference>
<feature type="chain" id="PRO_1000076548" description="Iron-sulfur cluster assembly protein CyaY">
    <location>
        <begin position="1"/>
        <end position="103"/>
    </location>
</feature>
<evidence type="ECO:0000255" key="1">
    <source>
        <dbReference type="HAMAP-Rule" id="MF_00142"/>
    </source>
</evidence>